<reference key="1">
    <citation type="journal article" date="2004" name="Nature">
        <title>Genome evolution in yeasts.</title>
        <authorList>
            <person name="Dujon B."/>
            <person name="Sherman D."/>
            <person name="Fischer G."/>
            <person name="Durrens P."/>
            <person name="Casaregola S."/>
            <person name="Lafontaine I."/>
            <person name="de Montigny J."/>
            <person name="Marck C."/>
            <person name="Neuveglise C."/>
            <person name="Talla E."/>
            <person name="Goffard N."/>
            <person name="Frangeul L."/>
            <person name="Aigle M."/>
            <person name="Anthouard V."/>
            <person name="Babour A."/>
            <person name="Barbe V."/>
            <person name="Barnay S."/>
            <person name="Blanchin S."/>
            <person name="Beckerich J.-M."/>
            <person name="Beyne E."/>
            <person name="Bleykasten C."/>
            <person name="Boisrame A."/>
            <person name="Boyer J."/>
            <person name="Cattolico L."/>
            <person name="Confanioleri F."/>
            <person name="de Daruvar A."/>
            <person name="Despons L."/>
            <person name="Fabre E."/>
            <person name="Fairhead C."/>
            <person name="Ferry-Dumazet H."/>
            <person name="Groppi A."/>
            <person name="Hantraye F."/>
            <person name="Hennequin C."/>
            <person name="Jauniaux N."/>
            <person name="Joyet P."/>
            <person name="Kachouri R."/>
            <person name="Kerrest A."/>
            <person name="Koszul R."/>
            <person name="Lemaire M."/>
            <person name="Lesur I."/>
            <person name="Ma L."/>
            <person name="Muller H."/>
            <person name="Nicaud J.-M."/>
            <person name="Nikolski M."/>
            <person name="Oztas S."/>
            <person name="Ozier-Kalogeropoulos O."/>
            <person name="Pellenz S."/>
            <person name="Potier S."/>
            <person name="Richard G.-F."/>
            <person name="Straub M.-L."/>
            <person name="Suleau A."/>
            <person name="Swennen D."/>
            <person name="Tekaia F."/>
            <person name="Wesolowski-Louvel M."/>
            <person name="Westhof E."/>
            <person name="Wirth B."/>
            <person name="Zeniou-Meyer M."/>
            <person name="Zivanovic Y."/>
            <person name="Bolotin-Fukuhara M."/>
            <person name="Thierry A."/>
            <person name="Bouchier C."/>
            <person name="Caudron B."/>
            <person name="Scarpelli C."/>
            <person name="Gaillardin C."/>
            <person name="Weissenbach J."/>
            <person name="Wincker P."/>
            <person name="Souciet J.-L."/>
        </authorList>
    </citation>
    <scope>NUCLEOTIDE SEQUENCE [LARGE SCALE GENOMIC DNA]</scope>
    <source>
        <strain>ATCC 36239 / CBS 767 / BCRC 21394 / JCM 1990 / NBRC 0083 / IGC 2968</strain>
    </source>
</reference>
<evidence type="ECO:0000250" key="1"/>
<evidence type="ECO:0000305" key="2"/>
<sequence length="746" mass="83810">MNFEEAEDINGVRFAWNTFPCTKADANKLVVPTGALYTPLKFREDLPIAEYDPHCCLNTHCRSILNPYCQIDPTGSWICPICGNRNPLPSHYQGISNENLPLELNPNSSTIEYITARPVANPPIFFFVIDLCQDEDNLKALKETLVVSLSLLPPNALIGLITYGTMVQVHDLGSESINKSYIFRGDKEYTDKQINDMLKKPVVVPAQNFANSLTRFFLPLEEVEFQLTSILENLTKDPWAVANGDRPLRSTGSALNVATNLLHSTFQGYGARIMLFSAGPDTLNPGLIVGPKLKEPIRSHSDIDKDNAKHYKKAIKFYDALAAKLVKNSHTVDIFAGCYDQIGMSEMKNLCNKTGGTLLLSDAFTTSIFKQSFLRLFNKDSEGYLLMSFNGTFDIKTSKELKVSGLIGNASSLAAKTNNVSENEIGIGGTSQYRLCSASPQHTYAVFFDIANTQSLPPNSQSYIQFITHYQHSSGTYRVRVTTISNILTSEDAILTQSFDQEAAAVLMARVTLFKSEQDDGADVLRWIDRMLIKLCQKFADYRKDFDESFRLSPQFSFYPQFIYYLRRSQFLQVFNNSPDETAFYRHVLLTEDINNSLIMIQPTLTSFALDSEPEPVLLDSVSIKDDRILLLDTFFHILIFHGKTIAEWRKAGYQNNPDYANFKQLLDEPKQEAAELLVDRYPLPRFIDTEEGGSQARFLYSKLNPSTTYNNQTFTGSNGAVVLTDDVSLQVFMSHLQKLVVSGSN</sequence>
<dbReference type="EMBL" id="CR382137">
    <property type="protein sequence ID" value="CAG87648.1"/>
    <property type="molecule type" value="Genomic_DNA"/>
</dbReference>
<dbReference type="RefSeq" id="XP_459434.1">
    <property type="nucleotide sequence ID" value="XM_459434.1"/>
</dbReference>
<dbReference type="SMR" id="Q6BQT6"/>
<dbReference type="FunCoup" id="Q6BQT6">
    <property type="interactions" value="1085"/>
</dbReference>
<dbReference type="STRING" id="284592.Q6BQT6"/>
<dbReference type="GeneID" id="2902527"/>
<dbReference type="KEGG" id="dha:DEHA2E02332g"/>
<dbReference type="VEuPathDB" id="FungiDB:DEHA2E02332g"/>
<dbReference type="eggNOG" id="KOG1986">
    <property type="taxonomic scope" value="Eukaryota"/>
</dbReference>
<dbReference type="HOGENOM" id="CLU_008658_3_0_1"/>
<dbReference type="InParanoid" id="Q6BQT6"/>
<dbReference type="OMA" id="FPPHYAE"/>
<dbReference type="OrthoDB" id="10256289at2759"/>
<dbReference type="Proteomes" id="UP000000599">
    <property type="component" value="Chromosome E"/>
</dbReference>
<dbReference type="GO" id="GO:0030127">
    <property type="term" value="C:COPII vesicle coat"/>
    <property type="evidence" value="ECO:0007669"/>
    <property type="project" value="EnsemblFungi"/>
</dbReference>
<dbReference type="GO" id="GO:0070971">
    <property type="term" value="C:endoplasmic reticulum exit site"/>
    <property type="evidence" value="ECO:0007669"/>
    <property type="project" value="TreeGrafter"/>
</dbReference>
<dbReference type="GO" id="GO:0005789">
    <property type="term" value="C:endoplasmic reticulum membrane"/>
    <property type="evidence" value="ECO:0007669"/>
    <property type="project" value="UniProtKB-SubCell"/>
</dbReference>
<dbReference type="GO" id="GO:0000139">
    <property type="term" value="C:Golgi membrane"/>
    <property type="evidence" value="ECO:0007669"/>
    <property type="project" value="UniProtKB-SubCell"/>
</dbReference>
<dbReference type="GO" id="GO:0005096">
    <property type="term" value="F:GTPase activator activity"/>
    <property type="evidence" value="ECO:0007669"/>
    <property type="project" value="EnsemblFungi"/>
</dbReference>
<dbReference type="GO" id="GO:0008270">
    <property type="term" value="F:zinc ion binding"/>
    <property type="evidence" value="ECO:0007669"/>
    <property type="project" value="InterPro"/>
</dbReference>
<dbReference type="GO" id="GO:0090110">
    <property type="term" value="P:COPII-coated vesicle cargo loading"/>
    <property type="evidence" value="ECO:0007669"/>
    <property type="project" value="EnsemblFungi"/>
</dbReference>
<dbReference type="GO" id="GO:0006886">
    <property type="term" value="P:intracellular protein transport"/>
    <property type="evidence" value="ECO:0007669"/>
    <property type="project" value="EnsemblFungi"/>
</dbReference>
<dbReference type="GO" id="GO:1902953">
    <property type="term" value="P:positive regulation of ER to Golgi vesicle-mediated transport"/>
    <property type="evidence" value="ECO:0007669"/>
    <property type="project" value="EnsemblFungi"/>
</dbReference>
<dbReference type="GO" id="GO:0070863">
    <property type="term" value="P:positive regulation of protein exit from endoplasmic reticulum"/>
    <property type="evidence" value="ECO:0007669"/>
    <property type="project" value="EnsemblFungi"/>
</dbReference>
<dbReference type="GO" id="GO:0003400">
    <property type="term" value="P:regulation of COPII vesicle coating"/>
    <property type="evidence" value="ECO:0007669"/>
    <property type="project" value="EnsemblFungi"/>
</dbReference>
<dbReference type="GO" id="GO:0061709">
    <property type="term" value="P:reticulophagy"/>
    <property type="evidence" value="ECO:0007669"/>
    <property type="project" value="EnsemblFungi"/>
</dbReference>
<dbReference type="CDD" id="cd11287">
    <property type="entry name" value="Sec23_C"/>
    <property type="match status" value="1"/>
</dbReference>
<dbReference type="FunFam" id="1.20.120.730:FF:000005">
    <property type="entry name" value="Protein transport protein SEC23"/>
    <property type="match status" value="1"/>
</dbReference>
<dbReference type="FunFam" id="2.30.30.380:FF:000001">
    <property type="entry name" value="Protein transport protein SEC23"/>
    <property type="match status" value="1"/>
</dbReference>
<dbReference type="FunFam" id="3.40.20.10:FF:000006">
    <property type="entry name" value="Protein transport protein SEC23"/>
    <property type="match status" value="1"/>
</dbReference>
<dbReference type="FunFam" id="3.40.50.410:FF:000008">
    <property type="entry name" value="Protein transport protein SEC23"/>
    <property type="match status" value="1"/>
</dbReference>
<dbReference type="Gene3D" id="2.60.40.1670">
    <property type="entry name" value="beta-sandwich domain of Sec23/24"/>
    <property type="match status" value="1"/>
</dbReference>
<dbReference type="Gene3D" id="1.20.120.730">
    <property type="entry name" value="Sec23/Sec24 helical domain"/>
    <property type="match status" value="1"/>
</dbReference>
<dbReference type="Gene3D" id="3.40.20.10">
    <property type="entry name" value="Severin"/>
    <property type="match status" value="1"/>
</dbReference>
<dbReference type="Gene3D" id="3.40.50.410">
    <property type="entry name" value="von Willebrand factor, type A domain"/>
    <property type="match status" value="1"/>
</dbReference>
<dbReference type="Gene3D" id="2.30.30.380">
    <property type="entry name" value="Zn-finger domain of Sec23/24"/>
    <property type="match status" value="1"/>
</dbReference>
<dbReference type="InterPro" id="IPR029006">
    <property type="entry name" value="ADF-H/Gelsolin-like_dom_sf"/>
</dbReference>
<dbReference type="InterPro" id="IPR007123">
    <property type="entry name" value="Gelsolin-like_dom"/>
</dbReference>
<dbReference type="InterPro" id="IPR036180">
    <property type="entry name" value="Gelsolin-like_dom_sf"/>
</dbReference>
<dbReference type="InterPro" id="IPR037364">
    <property type="entry name" value="Sec23"/>
</dbReference>
<dbReference type="InterPro" id="IPR006900">
    <property type="entry name" value="Sec23/24_helical_dom"/>
</dbReference>
<dbReference type="InterPro" id="IPR036175">
    <property type="entry name" value="Sec23/24_helical_dom_sf"/>
</dbReference>
<dbReference type="InterPro" id="IPR006896">
    <property type="entry name" value="Sec23/24_trunk_dom"/>
</dbReference>
<dbReference type="InterPro" id="IPR012990">
    <property type="entry name" value="Sec23_24_beta_S"/>
</dbReference>
<dbReference type="InterPro" id="IPR037550">
    <property type="entry name" value="Sec23_C"/>
</dbReference>
<dbReference type="InterPro" id="IPR036465">
    <property type="entry name" value="vWFA_dom_sf"/>
</dbReference>
<dbReference type="InterPro" id="IPR006895">
    <property type="entry name" value="Znf_Sec23_Sec24"/>
</dbReference>
<dbReference type="InterPro" id="IPR036174">
    <property type="entry name" value="Znf_Sec23_Sec24_sf"/>
</dbReference>
<dbReference type="PANTHER" id="PTHR11141">
    <property type="entry name" value="PROTEIN TRANSPORT PROTEIN SEC23"/>
    <property type="match status" value="1"/>
</dbReference>
<dbReference type="PANTHER" id="PTHR11141:SF0">
    <property type="entry name" value="PROTEIN TRANSPORT PROTEIN SEC23"/>
    <property type="match status" value="1"/>
</dbReference>
<dbReference type="Pfam" id="PF00626">
    <property type="entry name" value="Gelsolin"/>
    <property type="match status" value="1"/>
</dbReference>
<dbReference type="Pfam" id="PF08033">
    <property type="entry name" value="Sec23_BS"/>
    <property type="match status" value="1"/>
</dbReference>
<dbReference type="Pfam" id="PF04815">
    <property type="entry name" value="Sec23_helical"/>
    <property type="match status" value="1"/>
</dbReference>
<dbReference type="Pfam" id="PF04811">
    <property type="entry name" value="Sec23_trunk"/>
    <property type="match status" value="1"/>
</dbReference>
<dbReference type="Pfam" id="PF04810">
    <property type="entry name" value="zf-Sec23_Sec24"/>
    <property type="match status" value="1"/>
</dbReference>
<dbReference type="SUPFAM" id="SSF81995">
    <property type="entry name" value="beta-sandwich domain of Sec23/24"/>
    <property type="match status" value="1"/>
</dbReference>
<dbReference type="SUPFAM" id="SSF82754">
    <property type="entry name" value="C-terminal, gelsolin-like domain of Sec23/24"/>
    <property type="match status" value="1"/>
</dbReference>
<dbReference type="SUPFAM" id="SSF81811">
    <property type="entry name" value="Helical domain of Sec23/24"/>
    <property type="match status" value="1"/>
</dbReference>
<dbReference type="SUPFAM" id="SSF53300">
    <property type="entry name" value="vWA-like"/>
    <property type="match status" value="1"/>
</dbReference>
<dbReference type="SUPFAM" id="SSF82919">
    <property type="entry name" value="Zn-finger domain of Sec23/24"/>
    <property type="match status" value="1"/>
</dbReference>
<accession>Q6BQT6</accession>
<organism>
    <name type="scientific">Debaryomyces hansenii (strain ATCC 36239 / CBS 767 / BCRC 21394 / JCM 1990 / NBRC 0083 / IGC 2968)</name>
    <name type="common">Yeast</name>
    <name type="synonym">Torulaspora hansenii</name>
    <dbReference type="NCBI Taxonomy" id="284592"/>
    <lineage>
        <taxon>Eukaryota</taxon>
        <taxon>Fungi</taxon>
        <taxon>Dikarya</taxon>
        <taxon>Ascomycota</taxon>
        <taxon>Saccharomycotina</taxon>
        <taxon>Pichiomycetes</taxon>
        <taxon>Debaryomycetaceae</taxon>
        <taxon>Debaryomyces</taxon>
    </lineage>
</organism>
<feature type="chain" id="PRO_0000295461" description="Protein transport protein SEC23">
    <location>
        <begin position="1"/>
        <end position="746"/>
    </location>
</feature>
<feature type="binding site" evidence="1">
    <location>
        <position position="56"/>
    </location>
    <ligand>
        <name>Zn(2+)</name>
        <dbReference type="ChEBI" id="CHEBI:29105"/>
    </ligand>
</feature>
<feature type="binding site" evidence="1">
    <location>
        <position position="61"/>
    </location>
    <ligand>
        <name>Zn(2+)</name>
        <dbReference type="ChEBI" id="CHEBI:29105"/>
    </ligand>
</feature>
<feature type="binding site" evidence="1">
    <location>
        <position position="79"/>
    </location>
    <ligand>
        <name>Zn(2+)</name>
        <dbReference type="ChEBI" id="CHEBI:29105"/>
    </ligand>
</feature>
<feature type="binding site" evidence="1">
    <location>
        <position position="82"/>
    </location>
    <ligand>
        <name>Zn(2+)</name>
        <dbReference type="ChEBI" id="CHEBI:29105"/>
    </ligand>
</feature>
<protein>
    <recommendedName>
        <fullName>Protein transport protein SEC23</fullName>
    </recommendedName>
</protein>
<keyword id="KW-0963">Cytoplasm</keyword>
<keyword id="KW-0968">Cytoplasmic vesicle</keyword>
<keyword id="KW-0256">Endoplasmic reticulum</keyword>
<keyword id="KW-0931">ER-Golgi transport</keyword>
<keyword id="KW-0333">Golgi apparatus</keyword>
<keyword id="KW-0472">Membrane</keyword>
<keyword id="KW-0479">Metal-binding</keyword>
<keyword id="KW-0653">Protein transport</keyword>
<keyword id="KW-1185">Reference proteome</keyword>
<keyword id="KW-0813">Transport</keyword>
<keyword id="KW-0862">Zinc</keyword>
<proteinExistence type="inferred from homology"/>
<gene>
    <name type="primary">SEC23</name>
    <name type="ordered locus">DEHA2E02332g</name>
</gene>
<name>SEC23_DEBHA</name>
<comment type="function">
    <text evidence="1">Component of the coat protein complex II (COPII) which promotes the formation of transport vesicles from the endoplasmic reticulum (ER). The coat has two main functions, the physical deformation of the endoplasmic reticulum membrane into vesicles and the selection of cargo molecules (By similarity).</text>
</comment>
<comment type="subunit">
    <text evidence="1">The COPII coat is composed of at least 5 proteins: the SEC23/24 complex, the SEC13/31 complex, and the protein SAR1.</text>
</comment>
<comment type="subcellular location">
    <subcellularLocation>
        <location evidence="1">Cytoplasm</location>
    </subcellularLocation>
    <subcellularLocation>
        <location evidence="1">Cytoplasmic vesicle</location>
        <location evidence="1">COPII-coated vesicle membrane</location>
        <topology evidence="1">Peripheral membrane protein</topology>
        <orientation evidence="1">Cytoplasmic side</orientation>
    </subcellularLocation>
    <subcellularLocation>
        <location evidence="1">Endoplasmic reticulum membrane</location>
        <topology evidence="1">Peripheral membrane protein</topology>
        <orientation evidence="1">Cytoplasmic side</orientation>
    </subcellularLocation>
    <subcellularLocation>
        <location evidence="1">Golgi apparatus membrane</location>
        <topology evidence="1">Peripheral membrane protein</topology>
        <orientation evidence="1">Cytoplasmic side</orientation>
    </subcellularLocation>
</comment>
<comment type="similarity">
    <text evidence="2">Belongs to the SEC23/SEC24 family. SEC23 subfamily.</text>
</comment>